<comment type="function">
    <text evidence="3 6">Possible NADH-dependent oxidase, may function as a demethylase that converts N-methylproline to proline (Probable).</text>
</comment>
<comment type="catalytic activity">
    <reaction evidence="6">
        <text>N-methyl-L-proline + NAD(+) + H2O = L-proline + formaldehyde + NADH + H(+)</text>
        <dbReference type="Rhea" id="RHEA:83899"/>
        <dbReference type="ChEBI" id="CHEBI:15377"/>
        <dbReference type="ChEBI" id="CHEBI:15378"/>
        <dbReference type="ChEBI" id="CHEBI:16842"/>
        <dbReference type="ChEBI" id="CHEBI:57540"/>
        <dbReference type="ChEBI" id="CHEBI:57945"/>
        <dbReference type="ChEBI" id="CHEBI:60039"/>
        <dbReference type="ChEBI" id="CHEBI:133743"/>
    </reaction>
</comment>
<comment type="cofactor">
    <cofactor evidence="2">
        <name>FMN</name>
        <dbReference type="ChEBI" id="CHEBI:58210"/>
    </cofactor>
</comment>
<comment type="cofactor">
    <cofactor evidence="2">
        <name>FAD</name>
        <dbReference type="ChEBI" id="CHEBI:57692"/>
    </cofactor>
</comment>
<comment type="cofactor">
    <cofactor evidence="1">
        <name>[4Fe-4S] cluster</name>
        <dbReference type="ChEBI" id="CHEBI:49883"/>
    </cofactor>
    <text evidence="1">Binds 1 [4Fe-4S] cluster per monomer via a modified motif.</text>
</comment>
<comment type="pathway">
    <text evidence="3">Amine and polyamine degradation; stachydrine degradation.</text>
</comment>
<comment type="induction">
    <text evidence="3">By stachydrine.</text>
</comment>
<comment type="disruption phenotype">
    <text evidence="3">Loss of growth on stachydrine and its degradation product N-methylproline; still grows on proline. Proline uptake is reduced by 41%. Stachydrine (an osmoprotectant) no longer protects cells against growth inhibition by 500 mM NaCl. Stachydrine uptake is normal, but its metabolism to ethanol-insoluble compounds after 18 hours is seriously impaired. Colonizes Moapa 69 M.sativa plants as well as wild-type but is slightly impaired in competition with wild-type bacteria.</text>
</comment>
<comment type="similarity">
    <text evidence="5">In the N-terminal section; belongs to the NADH:flavin oxidoreductase/NADH oxidase family.</text>
</comment>
<comment type="sequence caution" evidence="5">
    <conflict type="frameshift">
        <sequence resource="EMBL-CDS" id="AAC63907"/>
    </conflict>
</comment>
<gene>
    <name evidence="4" type="primary">stcD</name>
    <name type="synonym">stcD2</name>
    <name type="ordered locus">RB1010</name>
    <name type="ORF">SMb21570</name>
</gene>
<name>STCD_RHIME</name>
<proteinExistence type="evidence at transcript level"/>
<geneLocation type="plasmid">
    <name>pSymB</name>
    <name>megaplasmid 2</name>
</geneLocation>
<accession>O87278</accession>
<feature type="chain" id="PRO_0000194491" description="Probable N-methylproline demethylase">
    <location>
        <begin position="1"/>
        <end position="678"/>
    </location>
</feature>
<feature type="binding site" evidence="2">
    <location>
        <position position="59"/>
    </location>
    <ligand>
        <name>FMN</name>
        <dbReference type="ChEBI" id="CHEBI:58210"/>
    </ligand>
</feature>
<feature type="binding site" evidence="2">
    <location>
        <position position="102"/>
    </location>
    <ligand>
        <name>FMN</name>
        <dbReference type="ChEBI" id="CHEBI:58210"/>
    </ligand>
</feature>
<feature type="binding site" evidence="2">
    <location>
        <position position="220"/>
    </location>
    <ligand>
        <name>FMN</name>
        <dbReference type="ChEBI" id="CHEBI:58210"/>
    </ligand>
</feature>
<feature type="binding site" evidence="2">
    <location>
        <position position="299"/>
    </location>
    <ligand>
        <name>FMN</name>
        <dbReference type="ChEBI" id="CHEBI:58210"/>
    </ligand>
</feature>
<feature type="binding site" evidence="2">
    <location>
        <begin position="321"/>
        <end position="322"/>
    </location>
    <ligand>
        <name>FMN</name>
        <dbReference type="ChEBI" id="CHEBI:58210"/>
    </ligand>
</feature>
<feature type="binding site" evidence="1">
    <location>
        <position position="345"/>
    </location>
    <ligand>
        <name>[4Fe-4S] cluster</name>
        <dbReference type="ChEBI" id="CHEBI:49883"/>
    </ligand>
</feature>
<feature type="binding site" evidence="1">
    <location>
        <position position="351"/>
    </location>
    <ligand>
        <name>[4Fe-4S] cluster</name>
        <dbReference type="ChEBI" id="CHEBI:49883"/>
    </ligand>
</feature>
<feature type="binding site" evidence="1">
    <location>
        <position position="363"/>
    </location>
    <ligand>
        <name>[4Fe-4S] cluster</name>
        <dbReference type="ChEBI" id="CHEBI:49883"/>
    </ligand>
</feature>
<feature type="binding site" evidence="2">
    <location>
        <position position="396"/>
    </location>
    <ligand>
        <name>FAD</name>
        <dbReference type="ChEBI" id="CHEBI:57692"/>
    </ligand>
</feature>
<feature type="binding site" evidence="2">
    <location>
        <position position="415"/>
    </location>
    <ligand>
        <name>FAD</name>
        <dbReference type="ChEBI" id="CHEBI:57692"/>
    </ligand>
</feature>
<feature type="binding site" evidence="2">
    <location>
        <position position="423"/>
    </location>
    <ligand>
        <name>FAD</name>
        <dbReference type="ChEBI" id="CHEBI:57692"/>
    </ligand>
</feature>
<feature type="binding site" evidence="2">
    <location>
        <position position="433"/>
    </location>
    <ligand>
        <name>FAD</name>
        <dbReference type="ChEBI" id="CHEBI:57692"/>
    </ligand>
</feature>
<feature type="binding site" evidence="2">
    <location>
        <position position="460"/>
    </location>
    <ligand>
        <name>FAD</name>
        <dbReference type="ChEBI" id="CHEBI:57692"/>
    </ligand>
</feature>
<feature type="sequence conflict" description="In Ref. 1; AAC63907." evidence="5" ref="1">
    <original>LL</original>
    <variation>FF</variation>
    <location>
        <begin position="6"/>
        <end position="7"/>
    </location>
</feature>
<feature type="sequence conflict" description="In Ref. 1; AAC63907." evidence="5" ref="1">
    <original>VSKDSPPVFNNLLAYRDEIVPWIREMTDA</original>
    <variation>SRRTARRSSTICSPTGTRSCRGSGRCRP</variation>
    <location>
        <begin position="63"/>
        <end position="91"/>
    </location>
</feature>
<feature type="sequence conflict" description="In Ref. 1; AAC63907." evidence="5" ref="1">
    <original>EGA</original>
    <variation>RGR</variation>
    <location>
        <begin position="95"/>
        <end position="97"/>
    </location>
</feature>
<feature type="sequence conflict" description="In Ref. 1." evidence="5" ref="1">
    <original>Y</original>
    <variation>I</variation>
    <location>
        <position position="591"/>
    </location>
</feature>
<reference key="1">
    <citation type="journal article" date="1998" name="Appl. Environ. Microbiol.">
        <title>A new genetic locus in Sinorhizobium meliloti is involved in stachydrine utilization.</title>
        <authorList>
            <person name="Phillips D.A."/>
            <person name="Sande E.S."/>
            <person name="Vriezen J.A.C."/>
            <person name="de Bruijn F.J."/>
            <person name="Le Rudulier D."/>
            <person name="Joseph C.M."/>
        </authorList>
    </citation>
    <scope>NUCLEOTIDE SEQUENCE [GENOMIC DNA]</scope>
    <scope>FUNCTION</scope>
    <scope>INDUCTION BY STACHYDRINE</scope>
    <scope>DISRUPTION PHENOTYPE</scope>
    <source>
        <strain>1021</strain>
    </source>
</reference>
<reference key="2">
    <citation type="journal article" date="2001" name="Proc. Natl. Acad. Sci. U.S.A.">
        <title>The complete sequence of the 1,683-kb pSymB megaplasmid from the N2-fixing endosymbiont Sinorhizobium meliloti.</title>
        <authorList>
            <person name="Finan T.M."/>
            <person name="Weidner S."/>
            <person name="Wong K."/>
            <person name="Buhrmester J."/>
            <person name="Chain P."/>
            <person name="Vorhoelter F.J."/>
            <person name="Hernandez-Lucas I."/>
            <person name="Becker A."/>
            <person name="Cowie A."/>
            <person name="Gouzy J."/>
            <person name="Golding B."/>
            <person name="Puehler A."/>
        </authorList>
    </citation>
    <scope>NUCLEOTIDE SEQUENCE [LARGE SCALE GENOMIC DNA]</scope>
    <source>
        <strain>1021</strain>
    </source>
</reference>
<reference key="3">
    <citation type="journal article" date="2001" name="Science">
        <title>The composite genome of the legume symbiont Sinorhizobium meliloti.</title>
        <authorList>
            <person name="Galibert F."/>
            <person name="Finan T.M."/>
            <person name="Long S.R."/>
            <person name="Puehler A."/>
            <person name="Abola P."/>
            <person name="Ampe F."/>
            <person name="Barloy-Hubler F."/>
            <person name="Barnett M.J."/>
            <person name="Becker A."/>
            <person name="Boistard P."/>
            <person name="Bothe G."/>
            <person name="Boutry M."/>
            <person name="Bowser L."/>
            <person name="Buhrmester J."/>
            <person name="Cadieu E."/>
            <person name="Capela D."/>
            <person name="Chain P."/>
            <person name="Cowie A."/>
            <person name="Davis R.W."/>
            <person name="Dreano S."/>
            <person name="Federspiel N.A."/>
            <person name="Fisher R.F."/>
            <person name="Gloux S."/>
            <person name="Godrie T."/>
            <person name="Goffeau A."/>
            <person name="Golding B."/>
            <person name="Gouzy J."/>
            <person name="Gurjal M."/>
            <person name="Hernandez-Lucas I."/>
            <person name="Hong A."/>
            <person name="Huizar L."/>
            <person name="Hyman R.W."/>
            <person name="Jones T."/>
            <person name="Kahn D."/>
            <person name="Kahn M.L."/>
            <person name="Kalman S."/>
            <person name="Keating D.H."/>
            <person name="Kiss E."/>
            <person name="Komp C."/>
            <person name="Lelaure V."/>
            <person name="Masuy D."/>
            <person name="Palm C."/>
            <person name="Peck M.C."/>
            <person name="Pohl T.M."/>
            <person name="Portetelle D."/>
            <person name="Purnelle B."/>
            <person name="Ramsperger U."/>
            <person name="Surzycki R."/>
            <person name="Thebault P."/>
            <person name="Vandenbol M."/>
            <person name="Vorhoelter F.J."/>
            <person name="Weidner S."/>
            <person name="Wells D.H."/>
            <person name="Wong K."/>
            <person name="Yeh K.-C."/>
            <person name="Batut J."/>
        </authorList>
    </citation>
    <scope>NUCLEOTIDE SEQUENCE [LARGE SCALE GENOMIC DNA]</scope>
    <source>
        <strain>1021</strain>
    </source>
</reference>
<keyword id="KW-0274">FAD</keyword>
<keyword id="KW-0285">Flavoprotein</keyword>
<keyword id="KW-0288">FMN</keyword>
<keyword id="KW-0408">Iron</keyword>
<keyword id="KW-0411">Iron-sulfur</keyword>
<keyword id="KW-0479">Metal-binding</keyword>
<keyword id="KW-0520">NAD</keyword>
<keyword id="KW-0560">Oxidoreductase</keyword>
<keyword id="KW-0614">Plasmid</keyword>
<keyword id="KW-1185">Reference proteome</keyword>
<sequence length="678" mass="74684">MPNDPLLQPYQLKHLTLRNRIIVTAHEPAYPEDGMPKERYRAYTVERARGGVAMTMTAGSAAVSKDSPPVFNNLLAYRDEIVPWIREMTDAVHEEGAVIMIQLTHLGRRTRWDKGDWLPVVAPSHHREAAHRAFPKKIEDWDIDRIIKDFADAAERMKAGGMDGVELEAYGHLIDQFASPLTNELDGPYGGSLDNRMRFCFDVLKAIRARVGDEFILGVRYTADECLPGGTDKAEGLEISKRLKESGLIDYLNIIRGHIDTDPGLTDVIPIQGMANSPHLDFAGEIRAATNFPTFHAAKIPDVATARHAIASGKVDMVGMTRAHMTDPHIVRKIIEKREEDIRPCVGANYCLDRIYQGGAAYCIHNAATGRELTMPHSIAKAHCRRKVVVVGTGPAGLEAARVAGERGHEVIVFEAASDPGGQVRLTAQSPRRREMISIIDWRMSQCEKLGVTFHFNTWAEAEAIQAESPDVVIIATGGLPHTEVLSRGNELVVSAWDIISGDAKPGTNVLIFDDAGDHAALQAAEFLATAGARVEIMTPDRSFAPEVMAMNLVPYMRCLQKLDVTFTVTYRLEAVEKSGNELVAHVGSDYGGISKQRTFDQVVVNHGTIPLDELYFELKPFSSNLGEIAHDQMIAGEPQSVVRNAEGKFQLFRIGDAVAARNTHAAIYDALRLLKDI</sequence>
<evidence type="ECO:0000250" key="1">
    <source>
        <dbReference type="UniProtKB" id="P0DXY1"/>
    </source>
</evidence>
<evidence type="ECO:0000250" key="2">
    <source>
        <dbReference type="UniProtKB" id="P42593"/>
    </source>
</evidence>
<evidence type="ECO:0000269" key="3">
    <source>
    </source>
</evidence>
<evidence type="ECO:0000303" key="4">
    <source>
    </source>
</evidence>
<evidence type="ECO:0000305" key="5"/>
<evidence type="ECO:0000305" key="6">
    <source>
    </source>
</evidence>
<protein>
    <recommendedName>
        <fullName evidence="6">Probable N-methylproline demethylase</fullName>
        <ecNumber evidence="6">1.3.1.-</ecNumber>
    </recommendedName>
    <alternativeName>
        <fullName>Stachydrine utilization protein StcD</fullName>
    </alternativeName>
</protein>
<dbReference type="EC" id="1.3.1.-" evidence="6"/>
<dbReference type="EMBL" id="AF016307">
    <property type="protein sequence ID" value="AAC63907.1"/>
    <property type="status" value="ALT_FRAME"/>
    <property type="molecule type" value="Genomic_DNA"/>
</dbReference>
<dbReference type="EMBL" id="AL591985">
    <property type="protein sequence ID" value="CAC49410.1"/>
    <property type="molecule type" value="Genomic_DNA"/>
</dbReference>
<dbReference type="PIR" id="B95968">
    <property type="entry name" value="B95968"/>
</dbReference>
<dbReference type="RefSeq" id="NP_437550.1">
    <property type="nucleotide sequence ID" value="NC_003078.1"/>
</dbReference>
<dbReference type="RefSeq" id="WP_010975854.1">
    <property type="nucleotide sequence ID" value="NC_003078.1"/>
</dbReference>
<dbReference type="SMR" id="O87278"/>
<dbReference type="EnsemblBacteria" id="CAC49410">
    <property type="protein sequence ID" value="CAC49410"/>
    <property type="gene ID" value="SM_b21570"/>
</dbReference>
<dbReference type="KEGG" id="sme:SM_b21570"/>
<dbReference type="PATRIC" id="fig|266834.11.peg.5935"/>
<dbReference type="eggNOG" id="COG0446">
    <property type="taxonomic scope" value="Bacteria"/>
</dbReference>
<dbReference type="eggNOG" id="COG1902">
    <property type="taxonomic scope" value="Bacteria"/>
</dbReference>
<dbReference type="HOGENOM" id="CLU_012153_1_2_5"/>
<dbReference type="OrthoDB" id="9804454at2"/>
<dbReference type="BioCyc" id="MetaCyc:MONOMER-2221"/>
<dbReference type="UniPathway" id="UPA00255"/>
<dbReference type="Proteomes" id="UP000001976">
    <property type="component" value="Plasmid pSymB"/>
</dbReference>
<dbReference type="GO" id="GO:0008670">
    <property type="term" value="F:2,4-dienoyl-CoA reductase (NADPH) activity"/>
    <property type="evidence" value="ECO:0007669"/>
    <property type="project" value="TreeGrafter"/>
</dbReference>
<dbReference type="GO" id="GO:0010181">
    <property type="term" value="F:FMN binding"/>
    <property type="evidence" value="ECO:0007669"/>
    <property type="project" value="InterPro"/>
</dbReference>
<dbReference type="GO" id="GO:0033543">
    <property type="term" value="P:fatty acid beta-oxidation, unsaturated, even number, reductase/isomerase pathway"/>
    <property type="evidence" value="ECO:0007669"/>
    <property type="project" value="TreeGrafter"/>
</dbReference>
<dbReference type="GO" id="GO:0019504">
    <property type="term" value="P:L-proline betaine catabolic process"/>
    <property type="evidence" value="ECO:0007669"/>
    <property type="project" value="UniProtKB-UniPathway"/>
</dbReference>
<dbReference type="CDD" id="cd04734">
    <property type="entry name" value="OYE_like_3_FMN"/>
    <property type="match status" value="1"/>
</dbReference>
<dbReference type="Gene3D" id="3.20.20.70">
    <property type="entry name" value="Aldolase class I"/>
    <property type="match status" value="1"/>
</dbReference>
<dbReference type="Gene3D" id="3.50.50.60">
    <property type="entry name" value="FAD/NAD(P)-binding domain"/>
    <property type="match status" value="1"/>
</dbReference>
<dbReference type="Gene3D" id="3.40.50.720">
    <property type="entry name" value="NAD(P)-binding Rossmann-like Domain"/>
    <property type="match status" value="1"/>
</dbReference>
<dbReference type="InterPro" id="IPR013785">
    <property type="entry name" value="Aldolase_TIM"/>
</dbReference>
<dbReference type="InterPro" id="IPR036188">
    <property type="entry name" value="FAD/NAD-bd_sf"/>
</dbReference>
<dbReference type="InterPro" id="IPR023753">
    <property type="entry name" value="FAD/NAD-binding_dom"/>
</dbReference>
<dbReference type="InterPro" id="IPR051793">
    <property type="entry name" value="NADH:flavin_oxidoreductase"/>
</dbReference>
<dbReference type="InterPro" id="IPR001155">
    <property type="entry name" value="OxRdtase_FMN_N"/>
</dbReference>
<dbReference type="PANTHER" id="PTHR42917">
    <property type="entry name" value="2,4-DIENOYL-COA REDUCTASE"/>
    <property type="match status" value="1"/>
</dbReference>
<dbReference type="PANTHER" id="PTHR42917:SF2">
    <property type="entry name" value="2,4-DIENOYL-COA REDUCTASE [(2E)-ENOYL-COA-PRODUCING]"/>
    <property type="match status" value="1"/>
</dbReference>
<dbReference type="Pfam" id="PF00724">
    <property type="entry name" value="Oxidored_FMN"/>
    <property type="match status" value="1"/>
</dbReference>
<dbReference type="Pfam" id="PF07992">
    <property type="entry name" value="Pyr_redox_2"/>
    <property type="match status" value="1"/>
</dbReference>
<dbReference type="PRINTS" id="PR00411">
    <property type="entry name" value="PNDRDTASEI"/>
</dbReference>
<dbReference type="SUPFAM" id="SSF51905">
    <property type="entry name" value="FAD/NAD(P)-binding domain"/>
    <property type="match status" value="1"/>
</dbReference>
<dbReference type="SUPFAM" id="SSF51395">
    <property type="entry name" value="FMN-linked oxidoreductases"/>
    <property type="match status" value="1"/>
</dbReference>
<organism>
    <name type="scientific">Rhizobium meliloti (strain 1021)</name>
    <name type="common">Ensifer meliloti</name>
    <name type="synonym">Sinorhizobium meliloti</name>
    <dbReference type="NCBI Taxonomy" id="266834"/>
    <lineage>
        <taxon>Bacteria</taxon>
        <taxon>Pseudomonadati</taxon>
        <taxon>Pseudomonadota</taxon>
        <taxon>Alphaproteobacteria</taxon>
        <taxon>Hyphomicrobiales</taxon>
        <taxon>Rhizobiaceae</taxon>
        <taxon>Sinorhizobium/Ensifer group</taxon>
        <taxon>Sinorhizobium</taxon>
    </lineage>
</organism>